<name>RISB_PSEP7</name>
<protein>
    <recommendedName>
        <fullName evidence="1">6,7-dimethyl-8-ribityllumazine synthase</fullName>
        <shortName evidence="1">DMRL synthase</shortName>
        <shortName evidence="1">LS</shortName>
        <shortName evidence="1">Lumazine synthase</shortName>
        <ecNumber evidence="1">2.5.1.78</ecNumber>
    </recommendedName>
</protein>
<evidence type="ECO:0000255" key="1">
    <source>
        <dbReference type="HAMAP-Rule" id="MF_00178"/>
    </source>
</evidence>
<accession>A6V049</accession>
<organism>
    <name type="scientific">Pseudomonas paraeruginosa (strain DSM 24068 / PA7)</name>
    <name type="common">Pseudomonas aeruginosa (strain PA7)</name>
    <dbReference type="NCBI Taxonomy" id="381754"/>
    <lineage>
        <taxon>Bacteria</taxon>
        <taxon>Pseudomonadati</taxon>
        <taxon>Pseudomonadota</taxon>
        <taxon>Gammaproteobacteria</taxon>
        <taxon>Pseudomonadales</taxon>
        <taxon>Pseudomonadaceae</taxon>
        <taxon>Pseudomonas</taxon>
        <taxon>Pseudomonas paraeruginosa</taxon>
    </lineage>
</organism>
<reference key="1">
    <citation type="submission" date="2007-06" db="EMBL/GenBank/DDBJ databases">
        <authorList>
            <person name="Dodson R.J."/>
            <person name="Harkins D."/>
            <person name="Paulsen I.T."/>
        </authorList>
    </citation>
    <scope>NUCLEOTIDE SEQUENCE [LARGE SCALE GENOMIC DNA]</scope>
    <source>
        <strain>DSM 24068 / PA7</strain>
    </source>
</reference>
<proteinExistence type="inferred from homology"/>
<sequence>MTLKTIEGTFIAPKGRYALVVGRFNSFVVESLVSGAVDALVRHGVAESEITIIRAPGAFEIPLVTQKVAQQGGFDAIIALGAVIRGGTPHFEYVAGECTKGLAQVSLQFGIPVAFGVLTVDSIEQAIERSGTKAGNKGAEAALSALEMVSLLAQLEAK</sequence>
<gene>
    <name evidence="1" type="primary">ribH</name>
    <name type="ordered locus">PSPA7_1048</name>
</gene>
<dbReference type="EC" id="2.5.1.78" evidence="1"/>
<dbReference type="EMBL" id="CP000744">
    <property type="protein sequence ID" value="ABR85121.1"/>
    <property type="molecule type" value="Genomic_DNA"/>
</dbReference>
<dbReference type="SMR" id="A6V049"/>
<dbReference type="KEGG" id="pap:PSPA7_1048"/>
<dbReference type="HOGENOM" id="CLU_089358_1_1_6"/>
<dbReference type="UniPathway" id="UPA00275">
    <property type="reaction ID" value="UER00404"/>
</dbReference>
<dbReference type="Proteomes" id="UP000001582">
    <property type="component" value="Chromosome"/>
</dbReference>
<dbReference type="GO" id="GO:0005829">
    <property type="term" value="C:cytosol"/>
    <property type="evidence" value="ECO:0007669"/>
    <property type="project" value="TreeGrafter"/>
</dbReference>
<dbReference type="GO" id="GO:0009349">
    <property type="term" value="C:riboflavin synthase complex"/>
    <property type="evidence" value="ECO:0007669"/>
    <property type="project" value="InterPro"/>
</dbReference>
<dbReference type="GO" id="GO:0000906">
    <property type="term" value="F:6,7-dimethyl-8-ribityllumazine synthase activity"/>
    <property type="evidence" value="ECO:0007669"/>
    <property type="project" value="UniProtKB-UniRule"/>
</dbReference>
<dbReference type="GO" id="GO:0009231">
    <property type="term" value="P:riboflavin biosynthetic process"/>
    <property type="evidence" value="ECO:0007669"/>
    <property type="project" value="UniProtKB-UniRule"/>
</dbReference>
<dbReference type="CDD" id="cd09209">
    <property type="entry name" value="Lumazine_synthase-I"/>
    <property type="match status" value="1"/>
</dbReference>
<dbReference type="FunFam" id="3.40.50.960:FF:000001">
    <property type="entry name" value="6,7-dimethyl-8-ribityllumazine synthase"/>
    <property type="match status" value="1"/>
</dbReference>
<dbReference type="Gene3D" id="3.40.50.960">
    <property type="entry name" value="Lumazine/riboflavin synthase"/>
    <property type="match status" value="1"/>
</dbReference>
<dbReference type="HAMAP" id="MF_00178">
    <property type="entry name" value="Lumazine_synth"/>
    <property type="match status" value="1"/>
</dbReference>
<dbReference type="InterPro" id="IPR034964">
    <property type="entry name" value="LS"/>
</dbReference>
<dbReference type="InterPro" id="IPR002180">
    <property type="entry name" value="LS/RS"/>
</dbReference>
<dbReference type="InterPro" id="IPR036467">
    <property type="entry name" value="LS/RS_sf"/>
</dbReference>
<dbReference type="NCBIfam" id="TIGR00114">
    <property type="entry name" value="lumazine-synth"/>
    <property type="match status" value="1"/>
</dbReference>
<dbReference type="NCBIfam" id="NF000812">
    <property type="entry name" value="PRK00061.1-4"/>
    <property type="match status" value="1"/>
</dbReference>
<dbReference type="PANTHER" id="PTHR21058:SF0">
    <property type="entry name" value="6,7-DIMETHYL-8-RIBITYLLUMAZINE SYNTHASE"/>
    <property type="match status" value="1"/>
</dbReference>
<dbReference type="PANTHER" id="PTHR21058">
    <property type="entry name" value="6,7-DIMETHYL-8-RIBITYLLUMAZINE SYNTHASE DMRL SYNTHASE LUMAZINE SYNTHASE"/>
    <property type="match status" value="1"/>
</dbReference>
<dbReference type="Pfam" id="PF00885">
    <property type="entry name" value="DMRL_synthase"/>
    <property type="match status" value="1"/>
</dbReference>
<dbReference type="SUPFAM" id="SSF52121">
    <property type="entry name" value="Lumazine synthase"/>
    <property type="match status" value="1"/>
</dbReference>
<comment type="function">
    <text evidence="1">Catalyzes the formation of 6,7-dimethyl-8-ribityllumazine by condensation of 5-amino-6-(D-ribitylamino)uracil with 3,4-dihydroxy-2-butanone 4-phosphate. This is the penultimate step in the biosynthesis of riboflavin.</text>
</comment>
<comment type="catalytic activity">
    <reaction evidence="1">
        <text>(2S)-2-hydroxy-3-oxobutyl phosphate + 5-amino-6-(D-ribitylamino)uracil = 6,7-dimethyl-8-(1-D-ribityl)lumazine + phosphate + 2 H2O + H(+)</text>
        <dbReference type="Rhea" id="RHEA:26152"/>
        <dbReference type="ChEBI" id="CHEBI:15377"/>
        <dbReference type="ChEBI" id="CHEBI:15378"/>
        <dbReference type="ChEBI" id="CHEBI:15934"/>
        <dbReference type="ChEBI" id="CHEBI:43474"/>
        <dbReference type="ChEBI" id="CHEBI:58201"/>
        <dbReference type="ChEBI" id="CHEBI:58830"/>
        <dbReference type="EC" id="2.5.1.78"/>
    </reaction>
</comment>
<comment type="pathway">
    <text evidence="1">Cofactor biosynthesis; riboflavin biosynthesis; riboflavin from 2-hydroxy-3-oxobutyl phosphate and 5-amino-6-(D-ribitylamino)uracil: step 1/2.</text>
</comment>
<comment type="subunit">
    <text evidence="1">Forms an icosahedral capsid composed of 60 subunits, arranged as a dodecamer of pentamers.</text>
</comment>
<comment type="similarity">
    <text evidence="1">Belongs to the DMRL synthase family.</text>
</comment>
<feature type="chain" id="PRO_1000040486" description="6,7-dimethyl-8-ribityllumazine synthase">
    <location>
        <begin position="1"/>
        <end position="158"/>
    </location>
</feature>
<feature type="active site" description="Proton donor" evidence="1">
    <location>
        <position position="90"/>
    </location>
</feature>
<feature type="binding site" evidence="1">
    <location>
        <position position="24"/>
    </location>
    <ligand>
        <name>5-amino-6-(D-ribitylamino)uracil</name>
        <dbReference type="ChEBI" id="CHEBI:15934"/>
    </ligand>
</feature>
<feature type="binding site" evidence="1">
    <location>
        <begin position="58"/>
        <end position="60"/>
    </location>
    <ligand>
        <name>5-amino-6-(D-ribitylamino)uracil</name>
        <dbReference type="ChEBI" id="CHEBI:15934"/>
    </ligand>
</feature>
<feature type="binding site" evidence="1">
    <location>
        <begin position="82"/>
        <end position="84"/>
    </location>
    <ligand>
        <name>5-amino-6-(D-ribitylamino)uracil</name>
        <dbReference type="ChEBI" id="CHEBI:15934"/>
    </ligand>
</feature>
<feature type="binding site" evidence="1">
    <location>
        <begin position="87"/>
        <end position="88"/>
    </location>
    <ligand>
        <name>(2S)-2-hydroxy-3-oxobutyl phosphate</name>
        <dbReference type="ChEBI" id="CHEBI:58830"/>
    </ligand>
</feature>
<feature type="binding site" evidence="1">
    <location>
        <position position="115"/>
    </location>
    <ligand>
        <name>5-amino-6-(D-ribitylamino)uracil</name>
        <dbReference type="ChEBI" id="CHEBI:15934"/>
    </ligand>
</feature>
<feature type="binding site" evidence="1">
    <location>
        <position position="129"/>
    </location>
    <ligand>
        <name>(2S)-2-hydroxy-3-oxobutyl phosphate</name>
        <dbReference type="ChEBI" id="CHEBI:58830"/>
    </ligand>
</feature>
<keyword id="KW-0686">Riboflavin biosynthesis</keyword>
<keyword id="KW-0808">Transferase</keyword>